<dbReference type="EC" id="2.4.2.7" evidence="1"/>
<dbReference type="EMBL" id="AL123456">
    <property type="protein sequence ID" value="CCP45380.1"/>
    <property type="status" value="ALT_INIT"/>
    <property type="molecule type" value="Genomic_DNA"/>
</dbReference>
<dbReference type="PIR" id="G70725">
    <property type="entry name" value="G70725"/>
</dbReference>
<dbReference type="RefSeq" id="NP_217100.1">
    <property type="nucleotide sequence ID" value="NC_000962.3"/>
</dbReference>
<dbReference type="SMR" id="P9WQ07"/>
<dbReference type="FunCoup" id="P9WQ07">
    <property type="interactions" value="303"/>
</dbReference>
<dbReference type="STRING" id="83332.Rv2584c"/>
<dbReference type="PaxDb" id="83332-Rv2584c"/>
<dbReference type="DNASU" id="888579"/>
<dbReference type="GeneID" id="888579"/>
<dbReference type="KEGG" id="mtu:Rv2584c"/>
<dbReference type="PATRIC" id="fig|83332.12.peg.2893"/>
<dbReference type="TubercuList" id="Rv2584c"/>
<dbReference type="eggNOG" id="COG0503">
    <property type="taxonomic scope" value="Bacteria"/>
</dbReference>
<dbReference type="InParanoid" id="P9WQ07"/>
<dbReference type="OrthoDB" id="9803963at2"/>
<dbReference type="UniPathway" id="UPA00588">
    <property type="reaction ID" value="UER00646"/>
</dbReference>
<dbReference type="Proteomes" id="UP000001584">
    <property type="component" value="Chromosome"/>
</dbReference>
<dbReference type="GO" id="GO:0005737">
    <property type="term" value="C:cytoplasm"/>
    <property type="evidence" value="ECO:0007669"/>
    <property type="project" value="UniProtKB-SubCell"/>
</dbReference>
<dbReference type="GO" id="GO:0005886">
    <property type="term" value="C:plasma membrane"/>
    <property type="evidence" value="ECO:0007005"/>
    <property type="project" value="MTBBASE"/>
</dbReference>
<dbReference type="GO" id="GO:0003999">
    <property type="term" value="F:adenine phosphoribosyltransferase activity"/>
    <property type="evidence" value="ECO:0000318"/>
    <property type="project" value="GO_Central"/>
</dbReference>
<dbReference type="GO" id="GO:0006168">
    <property type="term" value="P:adenine salvage"/>
    <property type="evidence" value="ECO:0007669"/>
    <property type="project" value="InterPro"/>
</dbReference>
<dbReference type="GO" id="GO:0044209">
    <property type="term" value="P:AMP salvage"/>
    <property type="evidence" value="ECO:0007669"/>
    <property type="project" value="UniProtKB-UniRule"/>
</dbReference>
<dbReference type="GO" id="GO:0006166">
    <property type="term" value="P:purine ribonucleoside salvage"/>
    <property type="evidence" value="ECO:0007669"/>
    <property type="project" value="UniProtKB-KW"/>
</dbReference>
<dbReference type="CDD" id="cd06223">
    <property type="entry name" value="PRTases_typeI"/>
    <property type="match status" value="1"/>
</dbReference>
<dbReference type="FunFam" id="3.40.50.2020:FF:000021">
    <property type="entry name" value="Adenine phosphoribosyltransferase"/>
    <property type="match status" value="1"/>
</dbReference>
<dbReference type="Gene3D" id="3.40.50.2020">
    <property type="match status" value="1"/>
</dbReference>
<dbReference type="HAMAP" id="MF_00004">
    <property type="entry name" value="Aden_phosphoribosyltr"/>
    <property type="match status" value="1"/>
</dbReference>
<dbReference type="InterPro" id="IPR005764">
    <property type="entry name" value="Ade_phspho_trans"/>
</dbReference>
<dbReference type="InterPro" id="IPR000836">
    <property type="entry name" value="PRibTrfase_dom"/>
</dbReference>
<dbReference type="InterPro" id="IPR029057">
    <property type="entry name" value="PRTase-like"/>
</dbReference>
<dbReference type="InterPro" id="IPR050054">
    <property type="entry name" value="UPRTase/APRTase"/>
</dbReference>
<dbReference type="NCBIfam" id="NF002636">
    <property type="entry name" value="PRK02304.1-5"/>
    <property type="match status" value="1"/>
</dbReference>
<dbReference type="PANTHER" id="PTHR32315">
    <property type="entry name" value="ADENINE PHOSPHORIBOSYLTRANSFERASE"/>
    <property type="match status" value="1"/>
</dbReference>
<dbReference type="PANTHER" id="PTHR32315:SF3">
    <property type="entry name" value="ADENINE PHOSPHORIBOSYLTRANSFERASE"/>
    <property type="match status" value="1"/>
</dbReference>
<dbReference type="Pfam" id="PF00156">
    <property type="entry name" value="Pribosyltran"/>
    <property type="match status" value="1"/>
</dbReference>
<dbReference type="SUPFAM" id="SSF53271">
    <property type="entry name" value="PRTase-like"/>
    <property type="match status" value="1"/>
</dbReference>
<dbReference type="PROSITE" id="PS00103">
    <property type="entry name" value="PUR_PYR_PR_TRANSFER"/>
    <property type="match status" value="1"/>
</dbReference>
<comment type="function">
    <text evidence="1">Catalyzes a salvage reaction resulting in the formation of AMP, that is energically less costly than de novo synthesis.</text>
</comment>
<comment type="catalytic activity">
    <reaction evidence="1">
        <text>AMP + diphosphate = 5-phospho-alpha-D-ribose 1-diphosphate + adenine</text>
        <dbReference type="Rhea" id="RHEA:16609"/>
        <dbReference type="ChEBI" id="CHEBI:16708"/>
        <dbReference type="ChEBI" id="CHEBI:33019"/>
        <dbReference type="ChEBI" id="CHEBI:58017"/>
        <dbReference type="ChEBI" id="CHEBI:456215"/>
        <dbReference type="EC" id="2.4.2.7"/>
    </reaction>
</comment>
<comment type="pathway">
    <text evidence="1">Purine metabolism; AMP biosynthesis via salvage pathway; AMP from adenine: step 1/1.</text>
</comment>
<comment type="subunit">
    <text evidence="1">Homodimer.</text>
</comment>
<comment type="subcellular location">
    <subcellularLocation>
        <location evidence="1">Cytoplasm</location>
    </subcellularLocation>
</comment>
<comment type="similarity">
    <text evidence="1">Belongs to the purine/pyrimidine phosphoribosyltransferase family.</text>
</comment>
<comment type="sequence caution">
    <conflict type="erroneous initiation">
        <sequence resource="EMBL-CDS" id="CCP45380"/>
    </conflict>
    <text>Extended N-terminus.</text>
</comment>
<accession>P9WQ07</accession>
<accession>L0TA41</accession>
<accession>Q50637</accession>
<reference key="1">
    <citation type="journal article" date="1998" name="Nature">
        <title>Deciphering the biology of Mycobacterium tuberculosis from the complete genome sequence.</title>
        <authorList>
            <person name="Cole S.T."/>
            <person name="Brosch R."/>
            <person name="Parkhill J."/>
            <person name="Garnier T."/>
            <person name="Churcher C.M."/>
            <person name="Harris D.E."/>
            <person name="Gordon S.V."/>
            <person name="Eiglmeier K."/>
            <person name="Gas S."/>
            <person name="Barry C.E. III"/>
            <person name="Tekaia F."/>
            <person name="Badcock K."/>
            <person name="Basham D."/>
            <person name="Brown D."/>
            <person name="Chillingworth T."/>
            <person name="Connor R."/>
            <person name="Davies R.M."/>
            <person name="Devlin K."/>
            <person name="Feltwell T."/>
            <person name="Gentles S."/>
            <person name="Hamlin N."/>
            <person name="Holroyd S."/>
            <person name="Hornsby T."/>
            <person name="Jagels K."/>
            <person name="Krogh A."/>
            <person name="McLean J."/>
            <person name="Moule S."/>
            <person name="Murphy L.D."/>
            <person name="Oliver S."/>
            <person name="Osborne J."/>
            <person name="Quail M.A."/>
            <person name="Rajandream M.A."/>
            <person name="Rogers J."/>
            <person name="Rutter S."/>
            <person name="Seeger K."/>
            <person name="Skelton S."/>
            <person name="Squares S."/>
            <person name="Squares R."/>
            <person name="Sulston J.E."/>
            <person name="Taylor K."/>
            <person name="Whitehead S."/>
            <person name="Barrell B.G."/>
        </authorList>
    </citation>
    <scope>NUCLEOTIDE SEQUENCE [LARGE SCALE GENOMIC DNA]</scope>
    <source>
        <strain>ATCC 25618 / H37Rv</strain>
    </source>
</reference>
<reference key="2">
    <citation type="journal article" date="2011" name="Mol. Cell. Proteomics">
        <title>Proteogenomic analysis of Mycobacterium tuberculosis by high resolution mass spectrometry.</title>
        <authorList>
            <person name="Kelkar D.S."/>
            <person name="Kumar D."/>
            <person name="Kumar P."/>
            <person name="Balakrishnan L."/>
            <person name="Muthusamy B."/>
            <person name="Yadav A.K."/>
            <person name="Shrivastava P."/>
            <person name="Marimuthu A."/>
            <person name="Anand S."/>
            <person name="Sundaram H."/>
            <person name="Kingsbury R."/>
            <person name="Harsha H.C."/>
            <person name="Nair B."/>
            <person name="Prasad T.S."/>
            <person name="Chauhan D.S."/>
            <person name="Katoch K."/>
            <person name="Katoch V.M."/>
            <person name="Kumar P."/>
            <person name="Chaerkady R."/>
            <person name="Ramachandran S."/>
            <person name="Dash D."/>
            <person name="Pandey A."/>
        </authorList>
    </citation>
    <scope>IDENTIFICATION BY MASS SPECTROMETRY [LARGE SCALE ANALYSIS]</scope>
    <source>
        <strain>ATCC 25618 / H37Rv</strain>
    </source>
</reference>
<gene>
    <name evidence="1" type="primary">apt</name>
    <name type="ordered locus">Rv2584c</name>
    <name type="ORF">MTCY227.17</name>
</gene>
<proteinExistence type="evidence at protein level"/>
<organism>
    <name type="scientific">Mycobacterium tuberculosis (strain ATCC 25618 / H37Rv)</name>
    <dbReference type="NCBI Taxonomy" id="83332"/>
    <lineage>
        <taxon>Bacteria</taxon>
        <taxon>Bacillati</taxon>
        <taxon>Actinomycetota</taxon>
        <taxon>Actinomycetes</taxon>
        <taxon>Mycobacteriales</taxon>
        <taxon>Mycobacteriaceae</taxon>
        <taxon>Mycobacterium</taxon>
        <taxon>Mycobacterium tuberculosis complex</taxon>
    </lineage>
</organism>
<sequence>MLNVIATGLSLKARGKRRRQRWVDDGRVLALGESRRSSAISVADVVASLTRDVADFPVPGVEFKDLTPLFADRRGLAAVTEALADRASGADLVAGVDARGFLVAAAVATRLEVGVLAVRKGGKLPRPVLSEEYYRAYGAATLEILAEGIEVAGRRVVIIDDVLATGGTIGATRRLLERGGANVAGAAVVVELAGLSGRAALAPLPVHSLSRL</sequence>
<protein>
    <recommendedName>
        <fullName evidence="1">Adenine phosphoribosyltransferase</fullName>
        <shortName evidence="1">APRT</shortName>
        <ecNumber evidence="1">2.4.2.7</ecNumber>
    </recommendedName>
</protein>
<feature type="chain" id="PRO_0000149420" description="Adenine phosphoribosyltransferase">
    <location>
        <begin position="1"/>
        <end position="212"/>
    </location>
</feature>
<name>APT_MYCTU</name>
<keyword id="KW-0963">Cytoplasm</keyword>
<keyword id="KW-0328">Glycosyltransferase</keyword>
<keyword id="KW-0660">Purine salvage</keyword>
<keyword id="KW-1185">Reference proteome</keyword>
<keyword id="KW-0808">Transferase</keyword>
<evidence type="ECO:0000255" key="1">
    <source>
        <dbReference type="HAMAP-Rule" id="MF_00004"/>
    </source>
</evidence>